<organism>
    <name type="scientific">Burkholderia mallei (strain SAVP1)</name>
    <dbReference type="NCBI Taxonomy" id="320388"/>
    <lineage>
        <taxon>Bacteria</taxon>
        <taxon>Pseudomonadati</taxon>
        <taxon>Pseudomonadota</taxon>
        <taxon>Betaproteobacteria</taxon>
        <taxon>Burkholderiales</taxon>
        <taxon>Burkholderiaceae</taxon>
        <taxon>Burkholderia</taxon>
        <taxon>pseudomallei group</taxon>
    </lineage>
</organism>
<proteinExistence type="inferred from homology"/>
<gene>
    <name evidence="1" type="primary">rplE</name>
    <name type="ordered locus">BMASAVP1_A3157</name>
</gene>
<reference key="1">
    <citation type="journal article" date="2010" name="Genome Biol. Evol.">
        <title>Continuing evolution of Burkholderia mallei through genome reduction and large-scale rearrangements.</title>
        <authorList>
            <person name="Losada L."/>
            <person name="Ronning C.M."/>
            <person name="DeShazer D."/>
            <person name="Woods D."/>
            <person name="Fedorova N."/>
            <person name="Kim H.S."/>
            <person name="Shabalina S.A."/>
            <person name="Pearson T.R."/>
            <person name="Brinkac L."/>
            <person name="Tan P."/>
            <person name="Nandi T."/>
            <person name="Crabtree J."/>
            <person name="Badger J."/>
            <person name="Beckstrom-Sternberg S."/>
            <person name="Saqib M."/>
            <person name="Schutzer S.E."/>
            <person name="Keim P."/>
            <person name="Nierman W.C."/>
        </authorList>
    </citation>
    <scope>NUCLEOTIDE SEQUENCE [LARGE SCALE GENOMIC DNA]</scope>
    <source>
        <strain>SAVP1</strain>
    </source>
</reference>
<accession>A1V891</accession>
<sequence>MARFQEFYKEKVVPGLIEKFGYKSVMEVPRITKITLNMGLGEAVADKKIIENAVGDLTKIAGQKPVVTKARKAIAGFKIRQGYPIGAMVTLRGRAMYEFLDRFVTVALPRVRDFRGVSGRAFDGRGNYNIGVKEQIIFPEIDYDKIDALRGLNISITTTAKTDDEAKALLASFKFPFRN</sequence>
<keyword id="KW-0687">Ribonucleoprotein</keyword>
<keyword id="KW-0689">Ribosomal protein</keyword>
<keyword id="KW-0694">RNA-binding</keyword>
<keyword id="KW-0699">rRNA-binding</keyword>
<keyword id="KW-0820">tRNA-binding</keyword>
<name>RL5_BURMS</name>
<dbReference type="EMBL" id="CP000526">
    <property type="protein sequence ID" value="ABM51668.1"/>
    <property type="molecule type" value="Genomic_DNA"/>
</dbReference>
<dbReference type="RefSeq" id="WP_004202757.1">
    <property type="nucleotide sequence ID" value="NC_008785.1"/>
</dbReference>
<dbReference type="SMR" id="A1V891"/>
<dbReference type="GeneID" id="93061820"/>
<dbReference type="KEGG" id="bmv:BMASAVP1_A3157"/>
<dbReference type="HOGENOM" id="CLU_061015_2_1_4"/>
<dbReference type="GO" id="GO:1990904">
    <property type="term" value="C:ribonucleoprotein complex"/>
    <property type="evidence" value="ECO:0007669"/>
    <property type="project" value="UniProtKB-KW"/>
</dbReference>
<dbReference type="GO" id="GO:0005840">
    <property type="term" value="C:ribosome"/>
    <property type="evidence" value="ECO:0007669"/>
    <property type="project" value="UniProtKB-KW"/>
</dbReference>
<dbReference type="GO" id="GO:0019843">
    <property type="term" value="F:rRNA binding"/>
    <property type="evidence" value="ECO:0007669"/>
    <property type="project" value="UniProtKB-UniRule"/>
</dbReference>
<dbReference type="GO" id="GO:0003735">
    <property type="term" value="F:structural constituent of ribosome"/>
    <property type="evidence" value="ECO:0007669"/>
    <property type="project" value="InterPro"/>
</dbReference>
<dbReference type="GO" id="GO:0000049">
    <property type="term" value="F:tRNA binding"/>
    <property type="evidence" value="ECO:0007669"/>
    <property type="project" value="UniProtKB-UniRule"/>
</dbReference>
<dbReference type="GO" id="GO:0006412">
    <property type="term" value="P:translation"/>
    <property type="evidence" value="ECO:0007669"/>
    <property type="project" value="UniProtKB-UniRule"/>
</dbReference>
<dbReference type="FunFam" id="3.30.1440.10:FF:000001">
    <property type="entry name" value="50S ribosomal protein L5"/>
    <property type="match status" value="1"/>
</dbReference>
<dbReference type="Gene3D" id="3.30.1440.10">
    <property type="match status" value="1"/>
</dbReference>
<dbReference type="HAMAP" id="MF_01333_B">
    <property type="entry name" value="Ribosomal_uL5_B"/>
    <property type="match status" value="1"/>
</dbReference>
<dbReference type="InterPro" id="IPR002132">
    <property type="entry name" value="Ribosomal_uL5"/>
</dbReference>
<dbReference type="InterPro" id="IPR020930">
    <property type="entry name" value="Ribosomal_uL5_bac-type"/>
</dbReference>
<dbReference type="InterPro" id="IPR031309">
    <property type="entry name" value="Ribosomal_uL5_C"/>
</dbReference>
<dbReference type="InterPro" id="IPR020929">
    <property type="entry name" value="Ribosomal_uL5_CS"/>
</dbReference>
<dbReference type="InterPro" id="IPR022803">
    <property type="entry name" value="Ribosomal_uL5_dom_sf"/>
</dbReference>
<dbReference type="InterPro" id="IPR031310">
    <property type="entry name" value="Ribosomal_uL5_N"/>
</dbReference>
<dbReference type="NCBIfam" id="NF000585">
    <property type="entry name" value="PRK00010.1"/>
    <property type="match status" value="1"/>
</dbReference>
<dbReference type="PANTHER" id="PTHR11994">
    <property type="entry name" value="60S RIBOSOMAL PROTEIN L11-RELATED"/>
    <property type="match status" value="1"/>
</dbReference>
<dbReference type="Pfam" id="PF00281">
    <property type="entry name" value="Ribosomal_L5"/>
    <property type="match status" value="1"/>
</dbReference>
<dbReference type="Pfam" id="PF00673">
    <property type="entry name" value="Ribosomal_L5_C"/>
    <property type="match status" value="1"/>
</dbReference>
<dbReference type="PIRSF" id="PIRSF002161">
    <property type="entry name" value="Ribosomal_L5"/>
    <property type="match status" value="1"/>
</dbReference>
<dbReference type="SUPFAM" id="SSF55282">
    <property type="entry name" value="RL5-like"/>
    <property type="match status" value="1"/>
</dbReference>
<dbReference type="PROSITE" id="PS00358">
    <property type="entry name" value="RIBOSOMAL_L5"/>
    <property type="match status" value="1"/>
</dbReference>
<comment type="function">
    <text evidence="1">This is one of the proteins that bind and probably mediate the attachment of the 5S RNA into the large ribosomal subunit, where it forms part of the central protuberance. In the 70S ribosome it contacts protein S13 of the 30S subunit (bridge B1b), connecting the 2 subunits; this bridge is implicated in subunit movement. Contacts the P site tRNA; the 5S rRNA and some of its associated proteins might help stabilize positioning of ribosome-bound tRNAs.</text>
</comment>
<comment type="subunit">
    <text evidence="1">Part of the 50S ribosomal subunit; part of the 5S rRNA/L5/L18/L25 subcomplex. Contacts the 5S rRNA and the P site tRNA. Forms a bridge to the 30S subunit in the 70S ribosome.</text>
</comment>
<comment type="similarity">
    <text evidence="1">Belongs to the universal ribosomal protein uL5 family.</text>
</comment>
<protein>
    <recommendedName>
        <fullName evidence="1">Large ribosomal subunit protein uL5</fullName>
    </recommendedName>
    <alternativeName>
        <fullName evidence="2">50S ribosomal protein L5</fullName>
    </alternativeName>
</protein>
<feature type="chain" id="PRO_1000052706" description="Large ribosomal subunit protein uL5">
    <location>
        <begin position="1"/>
        <end position="179"/>
    </location>
</feature>
<evidence type="ECO:0000255" key="1">
    <source>
        <dbReference type="HAMAP-Rule" id="MF_01333"/>
    </source>
</evidence>
<evidence type="ECO:0000305" key="2"/>